<protein>
    <recommendedName>
        <fullName>Uncharacterized protein YqgB</fullName>
    </recommendedName>
</protein>
<feature type="chain" id="PRO_0000294099" description="Uncharacterized protein YqgB">
    <location>
        <begin position="1"/>
        <end position="43"/>
    </location>
</feature>
<reference key="1">
    <citation type="journal article" date="2002" name="Nucleic Acids Res.">
        <title>Genome sequence of Shigella flexneri 2a: insights into pathogenicity through comparison with genomes of Escherichia coli K12 and O157.</title>
        <authorList>
            <person name="Jin Q."/>
            <person name="Yuan Z."/>
            <person name="Xu J."/>
            <person name="Wang Y."/>
            <person name="Shen Y."/>
            <person name="Lu W."/>
            <person name="Wang J."/>
            <person name="Liu H."/>
            <person name="Yang J."/>
            <person name="Yang F."/>
            <person name="Zhang X."/>
            <person name="Zhang J."/>
            <person name="Yang G."/>
            <person name="Wu H."/>
            <person name="Qu D."/>
            <person name="Dong J."/>
            <person name="Sun L."/>
            <person name="Xue Y."/>
            <person name="Zhao A."/>
            <person name="Gao Y."/>
            <person name="Zhu J."/>
            <person name="Kan B."/>
            <person name="Ding K."/>
            <person name="Chen S."/>
            <person name="Cheng H."/>
            <person name="Yao Z."/>
            <person name="He B."/>
            <person name="Chen R."/>
            <person name="Ma D."/>
            <person name="Qiang B."/>
            <person name="Wen Y."/>
            <person name="Hou Y."/>
            <person name="Yu J."/>
        </authorList>
    </citation>
    <scope>NUCLEOTIDE SEQUENCE [LARGE SCALE GENOMIC DNA]</scope>
    <source>
        <strain>301 / Serotype 2a</strain>
    </source>
</reference>
<reference key="2">
    <citation type="journal article" date="2003" name="Infect. Immun.">
        <title>Complete genome sequence and comparative genomics of Shigella flexneri serotype 2a strain 2457T.</title>
        <authorList>
            <person name="Wei J."/>
            <person name="Goldberg M.B."/>
            <person name="Burland V."/>
            <person name="Venkatesan M.M."/>
            <person name="Deng W."/>
            <person name="Fournier G."/>
            <person name="Mayhew G.F."/>
            <person name="Plunkett G. III"/>
            <person name="Rose D.J."/>
            <person name="Darling A."/>
            <person name="Mau B."/>
            <person name="Perna N.T."/>
            <person name="Payne S.M."/>
            <person name="Runyen-Janecky L.J."/>
            <person name="Zhou S."/>
            <person name="Schwartz D.C."/>
            <person name="Blattner F.R."/>
        </authorList>
    </citation>
    <scope>NUCLEOTIDE SEQUENCE [LARGE SCALE GENOMIC DNA]</scope>
    <source>
        <strain>ATCC 700930 / 2457T / Serotype 2a</strain>
    </source>
</reference>
<organism>
    <name type="scientific">Shigella flexneri</name>
    <dbReference type="NCBI Taxonomy" id="623"/>
    <lineage>
        <taxon>Bacteria</taxon>
        <taxon>Pseudomonadati</taxon>
        <taxon>Pseudomonadota</taxon>
        <taxon>Gammaproteobacteria</taxon>
        <taxon>Enterobacterales</taxon>
        <taxon>Enterobacteriaceae</taxon>
        <taxon>Shigella</taxon>
    </lineage>
</organism>
<accession>Q83JS7</accession>
<accession>Q7C029</accession>
<dbReference type="EMBL" id="AE005674">
    <property type="protein sequence ID" value="AAN44413.1"/>
    <property type="status" value="ALT_INIT"/>
    <property type="molecule type" value="Genomic_DNA"/>
</dbReference>
<dbReference type="EMBL" id="AE014073">
    <property type="protein sequence ID" value="AAP18236.1"/>
    <property type="status" value="ALT_INIT"/>
    <property type="molecule type" value="Genomic_DNA"/>
</dbReference>
<dbReference type="RefSeq" id="NP_708706.1">
    <property type="nucleotide sequence ID" value="NC_004337.2"/>
</dbReference>
<dbReference type="RefSeq" id="WP_005051767.1">
    <property type="nucleotide sequence ID" value="NZ_WPGW01000085.1"/>
</dbReference>
<dbReference type="STRING" id="198214.SF2932"/>
<dbReference type="PaxDb" id="198214-SF2932"/>
<dbReference type="GeneID" id="1025957"/>
<dbReference type="KEGG" id="sfl:SF2932"/>
<dbReference type="KEGG" id="sfx:S3134"/>
<dbReference type="PATRIC" id="fig|198214.7.peg.3488"/>
<dbReference type="HOGENOM" id="CLU_216465_0_0_6"/>
<dbReference type="Proteomes" id="UP000001006">
    <property type="component" value="Chromosome"/>
</dbReference>
<dbReference type="Proteomes" id="UP000002673">
    <property type="component" value="Chromosome"/>
</dbReference>
<dbReference type="GO" id="GO:0005737">
    <property type="term" value="C:cytoplasm"/>
    <property type="evidence" value="ECO:0007669"/>
    <property type="project" value="UniProtKB-SubCell"/>
</dbReference>
<dbReference type="InterPro" id="IPR020196">
    <property type="entry name" value="Uncharacterised_YqgB"/>
</dbReference>
<dbReference type="NCBIfam" id="NF033844">
    <property type="entry name" value="small_YqgB"/>
    <property type="match status" value="1"/>
</dbReference>
<dbReference type="Pfam" id="PF11036">
    <property type="entry name" value="YqgB"/>
    <property type="match status" value="1"/>
</dbReference>
<gene>
    <name type="primary">yqgB</name>
    <name type="ordered locus">SF2932</name>
    <name type="ordered locus">S3134</name>
</gene>
<keyword id="KW-0963">Cytoplasm</keyword>
<keyword id="KW-1185">Reference proteome</keyword>
<comment type="subcellular location">
    <subcellularLocation>
        <location evidence="1">Cytoplasm</location>
    </subcellularLocation>
</comment>
<comment type="similarity">
    <text evidence="2">Belongs to the YqgB family.</text>
</comment>
<comment type="sequence caution" evidence="2">
    <conflict type="erroneous initiation">
        <sequence resource="EMBL-CDS" id="AAN44413"/>
    </conflict>
    <text>Extended N-terminus.</text>
</comment>
<comment type="sequence caution" evidence="2">
    <conflict type="erroneous initiation">
        <sequence resource="EMBL-CDS" id="AAP18236"/>
    </conflict>
    <text>Extended N-terminus.</text>
</comment>
<sequence>MKKKPVAQSERQHTLLENPCAYGLLSQFQAATVVNCFTLNKII</sequence>
<name>YQGB_SHIFL</name>
<proteinExistence type="inferred from homology"/>
<evidence type="ECO:0000250" key="1"/>
<evidence type="ECO:0000305" key="2"/>